<feature type="chain" id="PRO_1000197346" description="Undecaprenyl-diphosphatase">
    <location>
        <begin position="1"/>
        <end position="292"/>
    </location>
</feature>
<feature type="transmembrane region" description="Helical" evidence="1">
    <location>
        <begin position="1"/>
        <end position="21"/>
    </location>
</feature>
<feature type="transmembrane region" description="Helical" evidence="1">
    <location>
        <begin position="46"/>
        <end position="66"/>
    </location>
</feature>
<feature type="transmembrane region" description="Helical" evidence="1">
    <location>
        <begin position="90"/>
        <end position="110"/>
    </location>
</feature>
<feature type="transmembrane region" description="Helical" evidence="1">
    <location>
        <begin position="114"/>
        <end position="134"/>
    </location>
</feature>
<feature type="transmembrane region" description="Helical" evidence="1">
    <location>
        <begin position="192"/>
        <end position="212"/>
    </location>
</feature>
<feature type="transmembrane region" description="Helical" evidence="1">
    <location>
        <begin position="225"/>
        <end position="245"/>
    </location>
</feature>
<feature type="transmembrane region" description="Helical" evidence="1">
    <location>
        <begin position="253"/>
        <end position="273"/>
    </location>
</feature>
<protein>
    <recommendedName>
        <fullName evidence="1">Undecaprenyl-diphosphatase</fullName>
        <ecNumber evidence="1">3.6.1.27</ecNumber>
    </recommendedName>
    <alternativeName>
        <fullName evidence="1">Bacitracin resistance protein</fullName>
    </alternativeName>
    <alternativeName>
        <fullName evidence="1">Undecaprenyl pyrophosphate phosphatase</fullName>
    </alternativeName>
</protein>
<dbReference type="EC" id="3.6.1.27" evidence="1"/>
<dbReference type="EMBL" id="CP001131">
    <property type="protein sequence ID" value="ACG71407.1"/>
    <property type="molecule type" value="Genomic_DNA"/>
</dbReference>
<dbReference type="RefSeq" id="WP_012524243.1">
    <property type="nucleotide sequence ID" value="NC_011145.1"/>
</dbReference>
<dbReference type="SMR" id="B4ULG0"/>
<dbReference type="KEGG" id="ank:AnaeK_0164"/>
<dbReference type="HOGENOM" id="CLU_060296_1_0_7"/>
<dbReference type="OrthoDB" id="9808289at2"/>
<dbReference type="Proteomes" id="UP000001871">
    <property type="component" value="Chromosome"/>
</dbReference>
<dbReference type="GO" id="GO:0005886">
    <property type="term" value="C:plasma membrane"/>
    <property type="evidence" value="ECO:0007669"/>
    <property type="project" value="UniProtKB-SubCell"/>
</dbReference>
<dbReference type="GO" id="GO:0050380">
    <property type="term" value="F:undecaprenyl-diphosphatase activity"/>
    <property type="evidence" value="ECO:0007669"/>
    <property type="project" value="UniProtKB-UniRule"/>
</dbReference>
<dbReference type="GO" id="GO:0071555">
    <property type="term" value="P:cell wall organization"/>
    <property type="evidence" value="ECO:0007669"/>
    <property type="project" value="UniProtKB-KW"/>
</dbReference>
<dbReference type="GO" id="GO:0009252">
    <property type="term" value="P:peptidoglycan biosynthetic process"/>
    <property type="evidence" value="ECO:0007669"/>
    <property type="project" value="UniProtKB-KW"/>
</dbReference>
<dbReference type="GO" id="GO:0008360">
    <property type="term" value="P:regulation of cell shape"/>
    <property type="evidence" value="ECO:0007669"/>
    <property type="project" value="UniProtKB-KW"/>
</dbReference>
<dbReference type="GO" id="GO:0046677">
    <property type="term" value="P:response to antibiotic"/>
    <property type="evidence" value="ECO:0007669"/>
    <property type="project" value="UniProtKB-UniRule"/>
</dbReference>
<dbReference type="HAMAP" id="MF_01006">
    <property type="entry name" value="Undec_diphosphatase"/>
    <property type="match status" value="1"/>
</dbReference>
<dbReference type="InterPro" id="IPR003824">
    <property type="entry name" value="UppP"/>
</dbReference>
<dbReference type="PANTHER" id="PTHR30622">
    <property type="entry name" value="UNDECAPRENYL-DIPHOSPHATASE"/>
    <property type="match status" value="1"/>
</dbReference>
<dbReference type="PANTHER" id="PTHR30622:SF4">
    <property type="entry name" value="UNDECAPRENYL-DIPHOSPHATASE"/>
    <property type="match status" value="1"/>
</dbReference>
<dbReference type="Pfam" id="PF02673">
    <property type="entry name" value="BacA"/>
    <property type="match status" value="1"/>
</dbReference>
<reference key="1">
    <citation type="submission" date="2008-08" db="EMBL/GenBank/DDBJ databases">
        <title>Complete sequence of Anaeromyxobacter sp. K.</title>
        <authorList>
            <consortium name="US DOE Joint Genome Institute"/>
            <person name="Lucas S."/>
            <person name="Copeland A."/>
            <person name="Lapidus A."/>
            <person name="Glavina del Rio T."/>
            <person name="Dalin E."/>
            <person name="Tice H."/>
            <person name="Bruce D."/>
            <person name="Goodwin L."/>
            <person name="Pitluck S."/>
            <person name="Saunders E."/>
            <person name="Brettin T."/>
            <person name="Detter J.C."/>
            <person name="Han C."/>
            <person name="Larimer F."/>
            <person name="Land M."/>
            <person name="Hauser L."/>
            <person name="Kyrpides N."/>
            <person name="Ovchinnikiva G."/>
            <person name="Beliaev A."/>
        </authorList>
    </citation>
    <scope>NUCLEOTIDE SEQUENCE [LARGE SCALE GENOMIC DNA]</scope>
    <source>
        <strain>K</strain>
    </source>
</reference>
<gene>
    <name evidence="1" type="primary">uppP</name>
    <name type="ordered locus">AnaeK_0164</name>
</gene>
<name>UPPP_ANASK</name>
<accession>B4ULG0</accession>
<proteinExistence type="inferred from homology"/>
<comment type="function">
    <text evidence="1">Catalyzes the dephosphorylation of undecaprenyl diphosphate (UPP). Confers resistance to bacitracin.</text>
</comment>
<comment type="catalytic activity">
    <reaction evidence="1">
        <text>di-trans,octa-cis-undecaprenyl diphosphate + H2O = di-trans,octa-cis-undecaprenyl phosphate + phosphate + H(+)</text>
        <dbReference type="Rhea" id="RHEA:28094"/>
        <dbReference type="ChEBI" id="CHEBI:15377"/>
        <dbReference type="ChEBI" id="CHEBI:15378"/>
        <dbReference type="ChEBI" id="CHEBI:43474"/>
        <dbReference type="ChEBI" id="CHEBI:58405"/>
        <dbReference type="ChEBI" id="CHEBI:60392"/>
        <dbReference type="EC" id="3.6.1.27"/>
    </reaction>
</comment>
<comment type="subcellular location">
    <subcellularLocation>
        <location evidence="1">Cell inner membrane</location>
        <topology evidence="1">Multi-pass membrane protein</topology>
    </subcellularLocation>
</comment>
<comment type="miscellaneous">
    <text>Bacitracin is thought to be involved in the inhibition of peptidoglycan synthesis by sequestering undecaprenyl diphosphate, thereby reducing the pool of lipid carrier available.</text>
</comment>
<comment type="similarity">
    <text evidence="1">Belongs to the UppP family.</text>
</comment>
<keyword id="KW-0046">Antibiotic resistance</keyword>
<keyword id="KW-0997">Cell inner membrane</keyword>
<keyword id="KW-1003">Cell membrane</keyword>
<keyword id="KW-0133">Cell shape</keyword>
<keyword id="KW-0961">Cell wall biogenesis/degradation</keyword>
<keyword id="KW-0378">Hydrolase</keyword>
<keyword id="KW-0472">Membrane</keyword>
<keyword id="KW-0573">Peptidoglycan synthesis</keyword>
<keyword id="KW-0812">Transmembrane</keyword>
<keyword id="KW-1133">Transmembrane helix</keyword>
<sequence length="292" mass="30466">MSLVSAALFGLLQALTEFLPVSSTAHLLVFGELLGHSLDDRRFRAFVTIIQAGTTLAVLVYFRADIARLVAASARGLARGRPFGTPEARLGWYIVLGTLPAALAGKLLEHRIEALGNWVIAGSLVALGLVLLAAERLASHRRRVEDVGAGDALLIGVAQALALVPGSSRSGTTITGGMLLGFTREAAARFSFLLSVPITLAAGAYKLWSTVPDLRGEAAWTVATVVGTVVSAVAGYLVIDWLLAWLRTRTTYVFVVWRLAAGAAIAALILSGVLPAGAEAPPPPPPALHAAP</sequence>
<organism>
    <name type="scientific">Anaeromyxobacter sp. (strain K)</name>
    <dbReference type="NCBI Taxonomy" id="447217"/>
    <lineage>
        <taxon>Bacteria</taxon>
        <taxon>Pseudomonadati</taxon>
        <taxon>Myxococcota</taxon>
        <taxon>Myxococcia</taxon>
        <taxon>Myxococcales</taxon>
        <taxon>Cystobacterineae</taxon>
        <taxon>Anaeromyxobacteraceae</taxon>
        <taxon>Anaeromyxobacter</taxon>
    </lineage>
</organism>
<evidence type="ECO:0000255" key="1">
    <source>
        <dbReference type="HAMAP-Rule" id="MF_01006"/>
    </source>
</evidence>